<comment type="function">
    <text evidence="1">Produces ATP from ADP in the presence of a proton gradient across the membrane. The catalytic sites are hosted primarily by the beta subunits.</text>
</comment>
<comment type="catalytic activity">
    <reaction evidence="1">
        <text>ATP + H2O + 4 H(+)(in) = ADP + phosphate + 5 H(+)(out)</text>
        <dbReference type="Rhea" id="RHEA:57720"/>
        <dbReference type="ChEBI" id="CHEBI:15377"/>
        <dbReference type="ChEBI" id="CHEBI:15378"/>
        <dbReference type="ChEBI" id="CHEBI:30616"/>
        <dbReference type="ChEBI" id="CHEBI:43474"/>
        <dbReference type="ChEBI" id="CHEBI:456216"/>
        <dbReference type="EC" id="7.1.2.2"/>
    </reaction>
</comment>
<comment type="subunit">
    <text evidence="1">F-type ATPases have 2 components, CF(1) - the catalytic core - and CF(0) - the membrane proton channel. CF(1) has five subunits: alpha(3), beta(3), gamma(1), delta(1), epsilon(1). CF(0) has three main subunits: a(1), b(2) and c(9-12). The alpha and beta chains form an alternating ring which encloses part of the gamma chain. CF(1) is attached to CF(0) by a central stalk formed by the gamma and epsilon chains, while a peripheral stalk is formed by the delta and b chains.</text>
</comment>
<comment type="subcellular location">
    <subcellularLocation>
        <location evidence="1">Cell inner membrane</location>
        <topology evidence="1">Peripheral membrane protein</topology>
    </subcellularLocation>
</comment>
<comment type="similarity">
    <text evidence="1">Belongs to the ATPase alpha/beta chains family.</text>
</comment>
<name>ATPB_LARHH</name>
<organism>
    <name type="scientific">Laribacter hongkongensis (strain HLHK9)</name>
    <dbReference type="NCBI Taxonomy" id="557598"/>
    <lineage>
        <taxon>Bacteria</taxon>
        <taxon>Pseudomonadati</taxon>
        <taxon>Pseudomonadota</taxon>
        <taxon>Betaproteobacteria</taxon>
        <taxon>Neisseriales</taxon>
        <taxon>Aquaspirillaceae</taxon>
        <taxon>Laribacter</taxon>
    </lineage>
</organism>
<keyword id="KW-0066">ATP synthesis</keyword>
<keyword id="KW-0067">ATP-binding</keyword>
<keyword id="KW-0997">Cell inner membrane</keyword>
<keyword id="KW-1003">Cell membrane</keyword>
<keyword id="KW-0139">CF(1)</keyword>
<keyword id="KW-0375">Hydrogen ion transport</keyword>
<keyword id="KW-0406">Ion transport</keyword>
<keyword id="KW-0472">Membrane</keyword>
<keyword id="KW-0547">Nucleotide-binding</keyword>
<keyword id="KW-1185">Reference proteome</keyword>
<keyword id="KW-1278">Translocase</keyword>
<keyword id="KW-0813">Transport</keyword>
<feature type="chain" id="PRO_1000166595" description="ATP synthase subunit beta">
    <location>
        <begin position="1"/>
        <end position="458"/>
    </location>
</feature>
<feature type="binding site" evidence="1">
    <location>
        <begin position="148"/>
        <end position="155"/>
    </location>
    <ligand>
        <name>ATP</name>
        <dbReference type="ChEBI" id="CHEBI:30616"/>
    </ligand>
</feature>
<reference key="1">
    <citation type="journal article" date="2009" name="PLoS Genet.">
        <title>The complete genome and proteome of Laribacter hongkongensis reveal potential mechanisms for adaptations to different temperatures and habitats.</title>
        <authorList>
            <person name="Woo P.C.Y."/>
            <person name="Lau S.K.P."/>
            <person name="Tse H."/>
            <person name="Teng J.L.L."/>
            <person name="Curreem S.O."/>
            <person name="Tsang A.K.L."/>
            <person name="Fan R.Y.Y."/>
            <person name="Wong G.K.M."/>
            <person name="Huang Y."/>
            <person name="Loman N.J."/>
            <person name="Snyder L.A.S."/>
            <person name="Cai J.J."/>
            <person name="Huang J.-D."/>
            <person name="Mak W."/>
            <person name="Pallen M.J."/>
            <person name="Lok S."/>
            <person name="Yuen K.-Y."/>
        </authorList>
    </citation>
    <scope>NUCLEOTIDE SEQUENCE [LARGE SCALE GENOMIC DNA]</scope>
    <source>
        <strain>HLHK9</strain>
    </source>
</reference>
<protein>
    <recommendedName>
        <fullName evidence="1">ATP synthase subunit beta</fullName>
        <ecNumber evidence="1">7.1.2.2</ecNumber>
    </recommendedName>
    <alternativeName>
        <fullName evidence="1">ATP synthase F1 sector subunit beta</fullName>
    </alternativeName>
    <alternativeName>
        <fullName evidence="1">F-ATPase subunit beta</fullName>
    </alternativeName>
</protein>
<evidence type="ECO:0000255" key="1">
    <source>
        <dbReference type="HAMAP-Rule" id="MF_01347"/>
    </source>
</evidence>
<sequence>MSQGKIVQIIGAVIDVEFPRDSIPRVYDALKVESTGLTLEVQQQLGDGVVRCIAMGSSDGLKRGLPVTNTGAAISVPVGTATLGRIMDVLGTPIDELGPVATEERMPIHRAAPKFDELSASSELLETGIKVIDLLCPFAKGGKVGLFGGAGVGKTVNMMELIRNIAIEHSGFSVFTGVGERTREGNDFYHEMKESNVLDKVALVYGQMNEPPGNRLRVALTGLTMAEKFRDEGRDVLLFVDNIYRYTLAGTEVSALLGRMPSAVGYQPTLAEEMGKFQERVASTKTGSITSIQAVYVPADDLTDPSPATTFAHLDATVVLSRDIASLGIYPAVDPLDSTSRQLDPLVVGDEHYSVARGVQMTLQKYKELRDIIAILGMDELSADDKLTVARARKIQRFLSQPFFVAEVFTGSPGKFVSLKDTIKGFKAILSGEYDHLPEQAFYMVGGIEEAVEKAASL</sequence>
<dbReference type="EC" id="7.1.2.2" evidence="1"/>
<dbReference type="EMBL" id="CP001154">
    <property type="protein sequence ID" value="ACO75979.1"/>
    <property type="molecule type" value="Genomic_DNA"/>
</dbReference>
<dbReference type="RefSeq" id="WP_012698442.1">
    <property type="nucleotide sequence ID" value="NC_012559.1"/>
</dbReference>
<dbReference type="SMR" id="C1D5G2"/>
<dbReference type="STRING" id="557598.LHK_03001"/>
<dbReference type="GeneID" id="75108221"/>
<dbReference type="KEGG" id="lhk:LHK_03001"/>
<dbReference type="eggNOG" id="COG0055">
    <property type="taxonomic scope" value="Bacteria"/>
</dbReference>
<dbReference type="HOGENOM" id="CLU_022398_0_2_4"/>
<dbReference type="Proteomes" id="UP000002010">
    <property type="component" value="Chromosome"/>
</dbReference>
<dbReference type="GO" id="GO:0005886">
    <property type="term" value="C:plasma membrane"/>
    <property type="evidence" value="ECO:0007669"/>
    <property type="project" value="UniProtKB-SubCell"/>
</dbReference>
<dbReference type="GO" id="GO:0045259">
    <property type="term" value="C:proton-transporting ATP synthase complex"/>
    <property type="evidence" value="ECO:0007669"/>
    <property type="project" value="UniProtKB-KW"/>
</dbReference>
<dbReference type="GO" id="GO:0005524">
    <property type="term" value="F:ATP binding"/>
    <property type="evidence" value="ECO:0007669"/>
    <property type="project" value="UniProtKB-UniRule"/>
</dbReference>
<dbReference type="GO" id="GO:0016887">
    <property type="term" value="F:ATP hydrolysis activity"/>
    <property type="evidence" value="ECO:0007669"/>
    <property type="project" value="InterPro"/>
</dbReference>
<dbReference type="GO" id="GO:0046933">
    <property type="term" value="F:proton-transporting ATP synthase activity, rotational mechanism"/>
    <property type="evidence" value="ECO:0007669"/>
    <property type="project" value="UniProtKB-UniRule"/>
</dbReference>
<dbReference type="CDD" id="cd18110">
    <property type="entry name" value="ATP-synt_F1_beta_C"/>
    <property type="match status" value="1"/>
</dbReference>
<dbReference type="CDD" id="cd18115">
    <property type="entry name" value="ATP-synt_F1_beta_N"/>
    <property type="match status" value="1"/>
</dbReference>
<dbReference type="CDD" id="cd01133">
    <property type="entry name" value="F1-ATPase_beta_CD"/>
    <property type="match status" value="1"/>
</dbReference>
<dbReference type="FunFam" id="1.10.1140.10:FF:000001">
    <property type="entry name" value="ATP synthase subunit beta"/>
    <property type="match status" value="1"/>
</dbReference>
<dbReference type="FunFam" id="2.40.10.170:FF:000003">
    <property type="entry name" value="ATP synthase subunit beta"/>
    <property type="match status" value="1"/>
</dbReference>
<dbReference type="FunFam" id="3.40.50.300:FF:000004">
    <property type="entry name" value="ATP synthase subunit beta"/>
    <property type="match status" value="1"/>
</dbReference>
<dbReference type="Gene3D" id="2.40.10.170">
    <property type="match status" value="1"/>
</dbReference>
<dbReference type="Gene3D" id="1.10.1140.10">
    <property type="entry name" value="Bovine Mitochondrial F1-atpase, Atp Synthase Beta Chain, Chain D, domain 3"/>
    <property type="match status" value="1"/>
</dbReference>
<dbReference type="Gene3D" id="3.40.50.300">
    <property type="entry name" value="P-loop containing nucleotide triphosphate hydrolases"/>
    <property type="match status" value="1"/>
</dbReference>
<dbReference type="HAMAP" id="MF_01347">
    <property type="entry name" value="ATP_synth_beta_bact"/>
    <property type="match status" value="1"/>
</dbReference>
<dbReference type="InterPro" id="IPR003593">
    <property type="entry name" value="AAA+_ATPase"/>
</dbReference>
<dbReference type="InterPro" id="IPR055190">
    <property type="entry name" value="ATP-synt_VA_C"/>
</dbReference>
<dbReference type="InterPro" id="IPR005722">
    <property type="entry name" value="ATP_synth_F1_bsu"/>
</dbReference>
<dbReference type="InterPro" id="IPR020003">
    <property type="entry name" value="ATPase_a/bsu_AS"/>
</dbReference>
<dbReference type="InterPro" id="IPR050053">
    <property type="entry name" value="ATPase_alpha/beta_chains"/>
</dbReference>
<dbReference type="InterPro" id="IPR004100">
    <property type="entry name" value="ATPase_F1/V1/A1_a/bsu_N"/>
</dbReference>
<dbReference type="InterPro" id="IPR036121">
    <property type="entry name" value="ATPase_F1/V1/A1_a/bsu_N_sf"/>
</dbReference>
<dbReference type="InterPro" id="IPR000194">
    <property type="entry name" value="ATPase_F1/V1/A1_a/bsu_nucl-bd"/>
</dbReference>
<dbReference type="InterPro" id="IPR024034">
    <property type="entry name" value="ATPase_F1/V1_b/a_C"/>
</dbReference>
<dbReference type="InterPro" id="IPR027417">
    <property type="entry name" value="P-loop_NTPase"/>
</dbReference>
<dbReference type="NCBIfam" id="TIGR01039">
    <property type="entry name" value="atpD"/>
    <property type="match status" value="1"/>
</dbReference>
<dbReference type="PANTHER" id="PTHR15184">
    <property type="entry name" value="ATP SYNTHASE"/>
    <property type="match status" value="1"/>
</dbReference>
<dbReference type="PANTHER" id="PTHR15184:SF71">
    <property type="entry name" value="ATP SYNTHASE SUBUNIT BETA, MITOCHONDRIAL"/>
    <property type="match status" value="1"/>
</dbReference>
<dbReference type="Pfam" id="PF00006">
    <property type="entry name" value="ATP-synt_ab"/>
    <property type="match status" value="1"/>
</dbReference>
<dbReference type="Pfam" id="PF02874">
    <property type="entry name" value="ATP-synt_ab_N"/>
    <property type="match status" value="1"/>
</dbReference>
<dbReference type="Pfam" id="PF22919">
    <property type="entry name" value="ATP-synt_VA_C"/>
    <property type="match status" value="1"/>
</dbReference>
<dbReference type="SMART" id="SM00382">
    <property type="entry name" value="AAA"/>
    <property type="match status" value="1"/>
</dbReference>
<dbReference type="SUPFAM" id="SSF47917">
    <property type="entry name" value="C-terminal domain of alpha and beta subunits of F1 ATP synthase"/>
    <property type="match status" value="1"/>
</dbReference>
<dbReference type="SUPFAM" id="SSF50615">
    <property type="entry name" value="N-terminal domain of alpha and beta subunits of F1 ATP synthase"/>
    <property type="match status" value="1"/>
</dbReference>
<dbReference type="SUPFAM" id="SSF52540">
    <property type="entry name" value="P-loop containing nucleoside triphosphate hydrolases"/>
    <property type="match status" value="1"/>
</dbReference>
<dbReference type="PROSITE" id="PS00152">
    <property type="entry name" value="ATPASE_ALPHA_BETA"/>
    <property type="match status" value="1"/>
</dbReference>
<gene>
    <name evidence="1" type="primary">atpD</name>
    <name type="ordered locus">LHK_03001</name>
</gene>
<accession>C1D5G2</accession>
<proteinExistence type="inferred from homology"/>